<sequence length="262" mass="27541">MSDDNSIASMAARLREAQASGRTIAPLRDTCPGGDATLAYAIQQINNDLRKTNGERVVGRKIGLTSPAVQKQLGVDQPDFGALFASMAYGDGEPMPLASLIQPKVEAEIALVLERDLTAEKHTFADLISATAYAVAAIEVVDSRIRDWDIRFFDTVADNASSALFVLGSRPVLLRDIDLTACAMTLAQDGEVLSRGNGAACLGNPLNAAAWLADRMVRLGTPLRAGDVVLTGALGPMVAVKAAGTYAAHIDGLGSVRATFTE</sequence>
<feature type="chain" id="PRO_0000337788" description="2-keto-4-pentenoate hydratase">
    <location>
        <begin position="1"/>
        <end position="262"/>
    </location>
</feature>
<reference key="1">
    <citation type="submission" date="2007-03" db="EMBL/GenBank/DDBJ databases">
        <title>Complete sequence of chromosome 2 of Burkholderia vietnamiensis G4.</title>
        <authorList>
            <consortium name="US DOE Joint Genome Institute"/>
            <person name="Copeland A."/>
            <person name="Lucas S."/>
            <person name="Lapidus A."/>
            <person name="Barry K."/>
            <person name="Detter J.C."/>
            <person name="Glavina del Rio T."/>
            <person name="Hammon N."/>
            <person name="Israni S."/>
            <person name="Dalin E."/>
            <person name="Tice H."/>
            <person name="Pitluck S."/>
            <person name="Chain P."/>
            <person name="Malfatti S."/>
            <person name="Shin M."/>
            <person name="Vergez L."/>
            <person name="Schmutz J."/>
            <person name="Larimer F."/>
            <person name="Land M."/>
            <person name="Hauser L."/>
            <person name="Kyrpides N."/>
            <person name="Tiedje J."/>
            <person name="Richardson P."/>
        </authorList>
    </citation>
    <scope>NUCLEOTIDE SEQUENCE [LARGE SCALE GENOMIC DNA]</scope>
    <source>
        <strain>G4 / LMG 22486</strain>
    </source>
</reference>
<name>MHPD_BURVG</name>
<accession>A4JPX9</accession>
<comment type="function">
    <text evidence="1">Catalyzes the conversion of 2-hydroxypentadienoic acid (enolic form of 2-oxopent-4-enoate) to 4-hydroxy-2-ketopentanoic acid.</text>
</comment>
<comment type="catalytic activity">
    <reaction evidence="1">
        <text>(S)-4-hydroxy-2-oxopentanoate = (2Z)-2-hydroxypenta-2,4-dienoate + H2O</text>
        <dbReference type="Rhea" id="RHEA:22580"/>
        <dbReference type="ChEBI" id="CHEBI:15377"/>
        <dbReference type="ChEBI" id="CHEBI:67152"/>
        <dbReference type="ChEBI" id="CHEBI:73143"/>
        <dbReference type="EC" id="4.2.1.80"/>
    </reaction>
</comment>
<comment type="cofactor">
    <cofactor evidence="1">
        <name>a divalent metal cation</name>
        <dbReference type="ChEBI" id="CHEBI:60240"/>
    </cofactor>
</comment>
<comment type="pathway">
    <text evidence="1">Aromatic compound metabolism; 3-phenylpropanoate degradation.</text>
</comment>
<comment type="similarity">
    <text evidence="1">Belongs to the hydratase/decarboxylase family. MhpD subfamily.</text>
</comment>
<protein>
    <recommendedName>
        <fullName evidence="1">2-keto-4-pentenoate hydratase</fullName>
        <ecNumber evidence="1">4.2.1.80</ecNumber>
    </recommendedName>
    <alternativeName>
        <fullName evidence="1">2-hydroxypentadienoic acid hydratase</fullName>
    </alternativeName>
</protein>
<gene>
    <name evidence="1" type="primary">mhpD</name>
    <name type="ordered locus">Bcep1808_5386</name>
</gene>
<evidence type="ECO:0000255" key="1">
    <source>
        <dbReference type="HAMAP-Rule" id="MF_01655"/>
    </source>
</evidence>
<proteinExistence type="inferred from homology"/>
<dbReference type="EC" id="4.2.1.80" evidence="1"/>
<dbReference type="EMBL" id="CP000615">
    <property type="protein sequence ID" value="ABO58332.1"/>
    <property type="molecule type" value="Genomic_DNA"/>
</dbReference>
<dbReference type="SMR" id="A4JPX9"/>
<dbReference type="KEGG" id="bvi:Bcep1808_5386"/>
<dbReference type="eggNOG" id="COG3971">
    <property type="taxonomic scope" value="Bacteria"/>
</dbReference>
<dbReference type="HOGENOM" id="CLU_060136_4_1_4"/>
<dbReference type="UniPathway" id="UPA00714"/>
<dbReference type="Proteomes" id="UP000002287">
    <property type="component" value="Chromosome 2"/>
</dbReference>
<dbReference type="GO" id="GO:0005737">
    <property type="term" value="C:cytoplasm"/>
    <property type="evidence" value="ECO:0007669"/>
    <property type="project" value="TreeGrafter"/>
</dbReference>
<dbReference type="GO" id="GO:0008684">
    <property type="term" value="F:2-oxopent-4-enoate hydratase activity"/>
    <property type="evidence" value="ECO:0007669"/>
    <property type="project" value="UniProtKB-UniRule"/>
</dbReference>
<dbReference type="GO" id="GO:0030145">
    <property type="term" value="F:manganese ion binding"/>
    <property type="evidence" value="ECO:0007669"/>
    <property type="project" value="InterPro"/>
</dbReference>
<dbReference type="GO" id="GO:0019380">
    <property type="term" value="P:3-phenylpropionate catabolic process"/>
    <property type="evidence" value="ECO:0007669"/>
    <property type="project" value="UniProtKB-UniRule"/>
</dbReference>
<dbReference type="Gene3D" id="3.90.850.10">
    <property type="entry name" value="Fumarylacetoacetase-like, C-terminal domain"/>
    <property type="match status" value="1"/>
</dbReference>
<dbReference type="HAMAP" id="MF_01655">
    <property type="entry name" value="MhpD"/>
    <property type="match status" value="1"/>
</dbReference>
<dbReference type="InterPro" id="IPR011234">
    <property type="entry name" value="Fumarylacetoacetase-like_C"/>
</dbReference>
<dbReference type="InterPro" id="IPR036663">
    <property type="entry name" value="Fumarylacetoacetase_C_sf"/>
</dbReference>
<dbReference type="InterPro" id="IPR050772">
    <property type="entry name" value="Hydratase-Decarb/MhpD_sf"/>
</dbReference>
<dbReference type="InterPro" id="IPR023793">
    <property type="entry name" value="Keto_pentenoate-hydratase"/>
</dbReference>
<dbReference type="NCBIfam" id="NF008461">
    <property type="entry name" value="PRK11342.1"/>
    <property type="match status" value="1"/>
</dbReference>
<dbReference type="PANTHER" id="PTHR30143:SF0">
    <property type="entry name" value="2-KETO-4-PENTENOATE HYDRATASE"/>
    <property type="match status" value="1"/>
</dbReference>
<dbReference type="PANTHER" id="PTHR30143">
    <property type="entry name" value="ACID HYDRATASE"/>
    <property type="match status" value="1"/>
</dbReference>
<dbReference type="Pfam" id="PF01557">
    <property type="entry name" value="FAA_hydrolase"/>
    <property type="match status" value="1"/>
</dbReference>
<dbReference type="SUPFAM" id="SSF56529">
    <property type="entry name" value="FAH"/>
    <property type="match status" value="1"/>
</dbReference>
<keyword id="KW-0058">Aromatic hydrocarbons catabolism</keyword>
<keyword id="KW-0456">Lyase</keyword>
<organism>
    <name type="scientific">Burkholderia vietnamiensis (strain G4 / LMG 22486)</name>
    <name type="common">Burkholderia cepacia (strain R1808)</name>
    <dbReference type="NCBI Taxonomy" id="269482"/>
    <lineage>
        <taxon>Bacteria</taxon>
        <taxon>Pseudomonadati</taxon>
        <taxon>Pseudomonadota</taxon>
        <taxon>Betaproteobacteria</taxon>
        <taxon>Burkholderiales</taxon>
        <taxon>Burkholderiaceae</taxon>
        <taxon>Burkholderia</taxon>
        <taxon>Burkholderia cepacia complex</taxon>
    </lineage>
</organism>